<proteinExistence type="evidence at protein level"/>
<sequence length="577" mass="62496">MTELAGASSSCCHRPAGRGAMQSVLHHFQRLRGREGGSHFINTSSPRGEAKMSITSDEVNFLVYRYLQESGFSHSAFTFGIESHISQSNINGTLVPPAALISILQKGLQYVEAEISINEDGTVFDGRPIESLSLIDAVMPDVVQTRQQAFREKLAQQQASAAAAAAAATAAATAATTTSAGVSHQNPSKNREATVNGEENRAHSVNNHAKPMEIDGEVEIPSSKATVLRGHESEVFICAWNPVSDLLASGSGDSTARIWNLNENSNGGSTQLVLRHCIREGGHDVPSNKDVTSLDWNTNGTLLATGSYDGFARIWTEDGNLASTLGQHKGPIFALKWNRKGNYILSAGVDKTTIIWDAHTGEAKQQFPFHSAPALDVDWQNNTTFASCSTDMCIHVCRLGCDRPVKTFQGHTNEVNAIKWDPSGMLLASCSDDMTLKIWSMKQEVCIHDLQAHNKEIYTIKWSPTGPATSNPNSNIMLASASFDSTVRLWDIERGVCTHTLTKHQEPVYSVAFSPDGKYLASGSFDKCVHIWNTQSGNLVHSYRGTGGIFEVCWNARGDKVGASASDGSVCVLDLRK</sequence>
<dbReference type="EMBL" id="Y12781">
    <property type="protein sequence ID" value="CAA73319.1"/>
    <property type="molecule type" value="mRNA"/>
</dbReference>
<dbReference type="EMBL" id="AK289409">
    <property type="protein sequence ID" value="BAF82098.1"/>
    <property type="molecule type" value="mRNA"/>
</dbReference>
<dbReference type="EMBL" id="AK290962">
    <property type="protein sequence ID" value="BAF83651.1"/>
    <property type="molecule type" value="mRNA"/>
</dbReference>
<dbReference type="EMBL" id="AC003036">
    <property type="status" value="NOT_ANNOTATED_CDS"/>
    <property type="molecule type" value="Genomic_DNA"/>
</dbReference>
<dbReference type="EMBL" id="BC032708">
    <property type="protein sequence ID" value="AAH32708.1"/>
    <property type="molecule type" value="mRNA"/>
</dbReference>
<dbReference type="EMBL" id="BC052304">
    <property type="protein sequence ID" value="AAH52304.1"/>
    <property type="molecule type" value="mRNA"/>
</dbReference>
<dbReference type="CCDS" id="CCDS14133.1">
    <molecule id="O60907-1"/>
</dbReference>
<dbReference type="CCDS" id="CCDS48078.1">
    <molecule id="O60907-2"/>
</dbReference>
<dbReference type="RefSeq" id="NP_001132938.1">
    <molecule id="O60907-1"/>
    <property type="nucleotide sequence ID" value="NM_001139466.1"/>
</dbReference>
<dbReference type="RefSeq" id="NP_001132939.1">
    <molecule id="O60907-2"/>
    <property type="nucleotide sequence ID" value="NM_001139467.1"/>
</dbReference>
<dbReference type="RefSeq" id="NP_001132940.1">
    <molecule id="O60907-2"/>
    <property type="nucleotide sequence ID" value="NM_001139468.1"/>
</dbReference>
<dbReference type="RefSeq" id="NP_005638.1">
    <molecule id="O60907-1"/>
    <property type="nucleotide sequence ID" value="NM_005647.4"/>
</dbReference>
<dbReference type="RefSeq" id="XP_011543873.1">
    <property type="nucleotide sequence ID" value="XM_011545571.2"/>
</dbReference>
<dbReference type="PDB" id="2XTC">
    <property type="method" value="X-ray"/>
    <property type="resolution" value="2.22 A"/>
    <property type="chains" value="A/B=52-141"/>
</dbReference>
<dbReference type="PDB" id="2XTD">
    <property type="method" value="X-ray"/>
    <property type="resolution" value="3.20 A"/>
    <property type="chains" value="A/B=52-122"/>
</dbReference>
<dbReference type="PDB" id="2XTE">
    <property type="method" value="X-ray"/>
    <property type="resolution" value="3.90 A"/>
    <property type="chains" value="A/B/C/D/E/F/G/H/I/J/K/L=52-141"/>
</dbReference>
<dbReference type="PDBsum" id="2XTC"/>
<dbReference type="PDBsum" id="2XTD"/>
<dbReference type="PDBsum" id="2XTE"/>
<dbReference type="SMR" id="O60907"/>
<dbReference type="BioGRID" id="112770">
    <property type="interactions" value="145"/>
</dbReference>
<dbReference type="CORUM" id="O60907"/>
<dbReference type="DIP" id="DIP-60532N"/>
<dbReference type="FunCoup" id="O60907">
    <property type="interactions" value="1059"/>
</dbReference>
<dbReference type="IntAct" id="O60907">
    <property type="interactions" value="82"/>
</dbReference>
<dbReference type="MINT" id="O60907"/>
<dbReference type="STRING" id="9606.ENSP00000495556"/>
<dbReference type="GlyGen" id="O60907">
    <property type="glycosylation" value="2 sites, 1 O-linked glycan (2 sites)"/>
</dbReference>
<dbReference type="iPTMnet" id="O60907"/>
<dbReference type="PhosphoSitePlus" id="O60907"/>
<dbReference type="BioMuta" id="TBL1X"/>
<dbReference type="jPOST" id="O60907"/>
<dbReference type="MassIVE" id="O60907"/>
<dbReference type="PaxDb" id="9606-ENSP00000217964"/>
<dbReference type="PeptideAtlas" id="O60907"/>
<dbReference type="ProteomicsDB" id="49664">
    <molecule id="O60907-1"/>
</dbReference>
<dbReference type="ProteomicsDB" id="49665">
    <molecule id="O60907-2"/>
</dbReference>
<dbReference type="Pumba" id="O60907"/>
<dbReference type="ABCD" id="O60907">
    <property type="antibodies" value="6 sequenced antibodies"/>
</dbReference>
<dbReference type="Antibodypedia" id="3946">
    <property type="antibodies" value="231 antibodies from 35 providers"/>
</dbReference>
<dbReference type="DNASU" id="6907"/>
<dbReference type="Ensembl" id="ENST00000380961.5">
    <molecule id="O60907-2"/>
    <property type="protein sequence ID" value="ENSP00000370348.1"/>
    <property type="gene ID" value="ENSG00000101849.18"/>
</dbReference>
<dbReference type="Ensembl" id="ENST00000407597.7">
    <molecule id="O60907-1"/>
    <property type="protein sequence ID" value="ENSP00000385988.2"/>
    <property type="gene ID" value="ENSG00000101849.18"/>
</dbReference>
<dbReference type="Ensembl" id="ENST00000424279.6">
    <molecule id="O60907-2"/>
    <property type="protein sequence ID" value="ENSP00000394097.1"/>
    <property type="gene ID" value="ENSG00000101849.18"/>
</dbReference>
<dbReference type="Ensembl" id="ENST00000645353.2">
    <molecule id="O60907-1"/>
    <property type="protein sequence ID" value="ENSP00000496215.1"/>
    <property type="gene ID" value="ENSG00000101849.18"/>
</dbReference>
<dbReference type="Ensembl" id="ENST00000645686.1">
    <molecule id="O60907-1"/>
    <property type="protein sequence ID" value="ENSP00000493782.1"/>
    <property type="gene ID" value="ENSG00000101849.18"/>
</dbReference>
<dbReference type="Ensembl" id="ENST00000646640.1">
    <molecule id="O60907-1"/>
    <property type="protein sequence ID" value="ENSP00000495556.1"/>
    <property type="gene ID" value="ENSG00000101849.18"/>
</dbReference>
<dbReference type="GeneID" id="6907"/>
<dbReference type="KEGG" id="hsa:6907"/>
<dbReference type="MANE-Select" id="ENST00000645353.2">
    <property type="protein sequence ID" value="ENSP00000496215.1"/>
    <property type="RefSeq nucleotide sequence ID" value="NM_005647.4"/>
    <property type="RefSeq protein sequence ID" value="NP_005638.1"/>
</dbReference>
<dbReference type="UCSC" id="uc004csq.5">
    <molecule id="O60907-1"/>
    <property type="organism name" value="human"/>
</dbReference>
<dbReference type="AGR" id="HGNC:11585"/>
<dbReference type="CTD" id="6907"/>
<dbReference type="DisGeNET" id="6907"/>
<dbReference type="GeneCards" id="TBL1X"/>
<dbReference type="HGNC" id="HGNC:11585">
    <property type="gene designation" value="TBL1X"/>
</dbReference>
<dbReference type="HPA" id="ENSG00000101849">
    <property type="expression patterns" value="Low tissue specificity"/>
</dbReference>
<dbReference type="MalaCards" id="TBL1X"/>
<dbReference type="MIM" id="300196">
    <property type="type" value="gene"/>
</dbReference>
<dbReference type="MIM" id="301033">
    <property type="type" value="phenotype"/>
</dbReference>
<dbReference type="neXtProt" id="NX_O60907"/>
<dbReference type="OpenTargets" id="ENSG00000101849"/>
<dbReference type="PharmGKB" id="PA36349"/>
<dbReference type="VEuPathDB" id="HostDB:ENSG00000101849"/>
<dbReference type="eggNOG" id="KOG0273">
    <property type="taxonomic scope" value="Eukaryota"/>
</dbReference>
<dbReference type="GeneTree" id="ENSGT00940000153421"/>
<dbReference type="HOGENOM" id="CLU_007609_2_0_1"/>
<dbReference type="InParanoid" id="O60907"/>
<dbReference type="OMA" id="VNFLIWR"/>
<dbReference type="OrthoDB" id="1367865at2759"/>
<dbReference type="PAN-GO" id="O60907">
    <property type="GO annotations" value="4 GO annotations based on evolutionary models"/>
</dbReference>
<dbReference type="PhylomeDB" id="O60907"/>
<dbReference type="TreeFam" id="TF323190"/>
<dbReference type="PathwayCommons" id="O60907"/>
<dbReference type="Reactome" id="R-HSA-1368082">
    <property type="pathway name" value="RORA activates gene expression"/>
</dbReference>
<dbReference type="Reactome" id="R-HSA-1368108">
    <property type="pathway name" value="BMAL1:CLOCK,NPAS2 activates circadian gene expression"/>
</dbReference>
<dbReference type="Reactome" id="R-HSA-1989781">
    <property type="pathway name" value="PPARA activates gene expression"/>
</dbReference>
<dbReference type="Reactome" id="R-HSA-2122947">
    <property type="pathway name" value="NOTCH1 Intracellular Domain Regulates Transcription"/>
</dbReference>
<dbReference type="Reactome" id="R-HSA-2151201">
    <property type="pathway name" value="Transcriptional activation of mitochondrial biogenesis"/>
</dbReference>
<dbReference type="Reactome" id="R-HSA-2426168">
    <property type="pathway name" value="Activation of gene expression by SREBF (SREBP)"/>
</dbReference>
<dbReference type="Reactome" id="R-HSA-2644606">
    <property type="pathway name" value="Constitutive Signaling by NOTCH1 PEST Domain Mutants"/>
</dbReference>
<dbReference type="Reactome" id="R-HSA-2894862">
    <property type="pathway name" value="Constitutive Signaling by NOTCH1 HD+PEST Domain Mutants"/>
</dbReference>
<dbReference type="Reactome" id="R-HSA-3214815">
    <property type="pathway name" value="HDACs deacetylate histones"/>
</dbReference>
<dbReference type="Reactome" id="R-HSA-350054">
    <property type="pathway name" value="Notch-HLH transcription pathway"/>
</dbReference>
<dbReference type="Reactome" id="R-HSA-381340">
    <property type="pathway name" value="Transcriptional regulation of white adipocyte differentiation"/>
</dbReference>
<dbReference type="Reactome" id="R-HSA-400206">
    <property type="pathway name" value="Regulation of lipid metabolism by PPARalpha"/>
</dbReference>
<dbReference type="Reactome" id="R-HSA-400253">
    <property type="pathway name" value="Circadian Clock"/>
</dbReference>
<dbReference type="Reactome" id="R-HSA-9022537">
    <property type="pathway name" value="Loss of MECP2 binding ability to the NCoR/SMRT complex"/>
</dbReference>
<dbReference type="Reactome" id="R-HSA-9022692">
    <property type="pathway name" value="Regulation of MECP2 expression and activity"/>
</dbReference>
<dbReference type="Reactome" id="R-HSA-9029569">
    <property type="pathway name" value="NR1H3 &amp; NR1H2 regulate gene expression linked to cholesterol transport and efflux"/>
</dbReference>
<dbReference type="Reactome" id="R-HSA-9609690">
    <property type="pathway name" value="HCMV Early Events"/>
</dbReference>
<dbReference type="Reactome" id="R-HSA-9707564">
    <property type="pathway name" value="Cytoprotection by HMOX1"/>
</dbReference>
<dbReference type="Reactome" id="R-HSA-9707616">
    <property type="pathway name" value="Heme signaling"/>
</dbReference>
<dbReference type="Reactome" id="R-HSA-9841922">
    <property type="pathway name" value="MLL4 and MLL3 complexes regulate expression of PPARG target genes in adipogenesis and hepatic steatosis"/>
</dbReference>
<dbReference type="SignaLink" id="O60907"/>
<dbReference type="SIGNOR" id="O60907"/>
<dbReference type="BioGRID-ORCS" id="6907">
    <property type="hits" value="12 hits in 782 CRISPR screens"/>
</dbReference>
<dbReference type="ChiTaRS" id="TBL1X">
    <property type="organism name" value="human"/>
</dbReference>
<dbReference type="EvolutionaryTrace" id="O60907"/>
<dbReference type="GeneWiki" id="TBL1X"/>
<dbReference type="GenomeRNAi" id="6907"/>
<dbReference type="Pharos" id="O60907">
    <property type="development level" value="Tbio"/>
</dbReference>
<dbReference type="PRO" id="PR:O60907"/>
<dbReference type="Proteomes" id="UP000005640">
    <property type="component" value="Chromosome X"/>
</dbReference>
<dbReference type="RNAct" id="O60907">
    <property type="molecule type" value="protein"/>
</dbReference>
<dbReference type="Bgee" id="ENSG00000101849">
    <property type="expression patterns" value="Expressed in cauda epididymis and 199 other cell types or tissues"/>
</dbReference>
<dbReference type="ExpressionAtlas" id="O60907">
    <property type="expression patterns" value="baseline and differential"/>
</dbReference>
<dbReference type="GO" id="GO:0000118">
    <property type="term" value="C:histone deacetylase complex"/>
    <property type="evidence" value="ECO:0000314"/>
    <property type="project" value="UniProtKB"/>
</dbReference>
<dbReference type="GO" id="GO:0072686">
    <property type="term" value="C:mitotic spindle"/>
    <property type="evidence" value="ECO:0000314"/>
    <property type="project" value="UniProtKB"/>
</dbReference>
<dbReference type="GO" id="GO:0005654">
    <property type="term" value="C:nucleoplasm"/>
    <property type="evidence" value="ECO:0000304"/>
    <property type="project" value="Reactome"/>
</dbReference>
<dbReference type="GO" id="GO:0005634">
    <property type="term" value="C:nucleus"/>
    <property type="evidence" value="ECO:0000314"/>
    <property type="project" value="UniProtKB"/>
</dbReference>
<dbReference type="GO" id="GO:0017053">
    <property type="term" value="C:transcription repressor complex"/>
    <property type="evidence" value="ECO:0000314"/>
    <property type="project" value="UniProtKB"/>
</dbReference>
<dbReference type="GO" id="GO:0042393">
    <property type="term" value="F:histone binding"/>
    <property type="evidence" value="ECO:0000314"/>
    <property type="project" value="UniProtKB"/>
</dbReference>
<dbReference type="GO" id="GO:0042802">
    <property type="term" value="F:identical protein binding"/>
    <property type="evidence" value="ECO:0000353"/>
    <property type="project" value="IntAct"/>
</dbReference>
<dbReference type="GO" id="GO:0000976">
    <property type="term" value="F:transcription cis-regulatory region binding"/>
    <property type="evidence" value="ECO:0000314"/>
    <property type="project" value="UniProtKB"/>
</dbReference>
<dbReference type="GO" id="GO:0003714">
    <property type="term" value="F:transcription corepressor activity"/>
    <property type="evidence" value="ECO:0000314"/>
    <property type="project" value="UniProtKB"/>
</dbReference>
<dbReference type="GO" id="GO:0000122">
    <property type="term" value="P:negative regulation of transcription by RNA polymerase II"/>
    <property type="evidence" value="ECO:0000314"/>
    <property type="project" value="UniProtKB"/>
</dbReference>
<dbReference type="GO" id="GO:0090263">
    <property type="term" value="P:positive regulation of canonical Wnt signaling pathway"/>
    <property type="evidence" value="ECO:0000315"/>
    <property type="project" value="UniProtKB"/>
</dbReference>
<dbReference type="GO" id="GO:0045893">
    <property type="term" value="P:positive regulation of DNA-templated transcription"/>
    <property type="evidence" value="ECO:0000314"/>
    <property type="project" value="UniProtKB"/>
</dbReference>
<dbReference type="GO" id="GO:0045944">
    <property type="term" value="P:positive regulation of transcription by RNA polymerase II"/>
    <property type="evidence" value="ECO:0000314"/>
    <property type="project" value="UniProtKB"/>
</dbReference>
<dbReference type="GO" id="GO:0043161">
    <property type="term" value="P:proteasome-mediated ubiquitin-dependent protein catabolic process"/>
    <property type="evidence" value="ECO:0000250"/>
    <property type="project" value="UniProtKB"/>
</dbReference>
<dbReference type="GO" id="GO:0050821">
    <property type="term" value="P:protein stabilization"/>
    <property type="evidence" value="ECO:0000250"/>
    <property type="project" value="UniProtKB"/>
</dbReference>
<dbReference type="GO" id="GO:0006508">
    <property type="term" value="P:proteolysis"/>
    <property type="evidence" value="ECO:0000315"/>
    <property type="project" value="UniProtKB"/>
</dbReference>
<dbReference type="GO" id="GO:0006357">
    <property type="term" value="P:regulation of transcription by RNA polymerase II"/>
    <property type="evidence" value="ECO:0000318"/>
    <property type="project" value="GO_Central"/>
</dbReference>
<dbReference type="GO" id="GO:0007605">
    <property type="term" value="P:sensory perception of sound"/>
    <property type="evidence" value="ECO:0000315"/>
    <property type="project" value="UniProtKB"/>
</dbReference>
<dbReference type="CDD" id="cd00200">
    <property type="entry name" value="WD40"/>
    <property type="match status" value="1"/>
</dbReference>
<dbReference type="FunFam" id="1.20.960.30:FF:000001">
    <property type="entry name" value="F-box-like/WD repeat-containing protein TBL1XR1"/>
    <property type="match status" value="1"/>
</dbReference>
<dbReference type="FunFam" id="2.130.10.10:FF:000014">
    <property type="entry name" value="Putative F-box-like/WD repeat-containing protein TBL1XR1"/>
    <property type="match status" value="1"/>
</dbReference>
<dbReference type="Gene3D" id="1.20.960.30">
    <property type="match status" value="1"/>
</dbReference>
<dbReference type="Gene3D" id="2.130.10.10">
    <property type="entry name" value="YVTN repeat-like/Quinoprotein amine dehydrogenase"/>
    <property type="match status" value="1"/>
</dbReference>
<dbReference type="InterPro" id="IPR045183">
    <property type="entry name" value="Ebi-like"/>
</dbReference>
<dbReference type="InterPro" id="IPR020472">
    <property type="entry name" value="G-protein_beta_WD-40_rep"/>
</dbReference>
<dbReference type="InterPro" id="IPR006594">
    <property type="entry name" value="LisH"/>
</dbReference>
<dbReference type="InterPro" id="IPR011047">
    <property type="entry name" value="Quinoprotein_ADH-like_sf"/>
</dbReference>
<dbReference type="InterPro" id="IPR015943">
    <property type="entry name" value="WD40/YVTN_repeat-like_dom_sf"/>
</dbReference>
<dbReference type="InterPro" id="IPR019775">
    <property type="entry name" value="WD40_repeat_CS"/>
</dbReference>
<dbReference type="InterPro" id="IPR036322">
    <property type="entry name" value="WD40_repeat_dom_sf"/>
</dbReference>
<dbReference type="InterPro" id="IPR001680">
    <property type="entry name" value="WD40_rpt"/>
</dbReference>
<dbReference type="PANTHER" id="PTHR22846:SF52">
    <property type="entry name" value="F-BOX-LIKE_WD REPEAT-CONTAINING PROTEIN TBL1X"/>
    <property type="match status" value="1"/>
</dbReference>
<dbReference type="PANTHER" id="PTHR22846">
    <property type="entry name" value="WD40 REPEAT PROTEIN"/>
    <property type="match status" value="1"/>
</dbReference>
<dbReference type="Pfam" id="PF08513">
    <property type="entry name" value="LisH"/>
    <property type="match status" value="1"/>
</dbReference>
<dbReference type="Pfam" id="PF00400">
    <property type="entry name" value="WD40"/>
    <property type="match status" value="6"/>
</dbReference>
<dbReference type="PRINTS" id="PR00320">
    <property type="entry name" value="GPROTEINBRPT"/>
</dbReference>
<dbReference type="SMART" id="SM00667">
    <property type="entry name" value="LisH"/>
    <property type="match status" value="1"/>
</dbReference>
<dbReference type="SMART" id="SM00320">
    <property type="entry name" value="WD40"/>
    <property type="match status" value="8"/>
</dbReference>
<dbReference type="SUPFAM" id="SSF50998">
    <property type="entry name" value="Quinoprotein alcohol dehydrogenase-like"/>
    <property type="match status" value="1"/>
</dbReference>
<dbReference type="SUPFAM" id="SSF50978">
    <property type="entry name" value="WD40 repeat-like"/>
    <property type="match status" value="1"/>
</dbReference>
<dbReference type="PROSITE" id="PS50896">
    <property type="entry name" value="LISH"/>
    <property type="match status" value="1"/>
</dbReference>
<dbReference type="PROSITE" id="PS00678">
    <property type="entry name" value="WD_REPEATS_1"/>
    <property type="match status" value="4"/>
</dbReference>
<dbReference type="PROSITE" id="PS50082">
    <property type="entry name" value="WD_REPEATS_2"/>
    <property type="match status" value="6"/>
</dbReference>
<dbReference type="PROSITE" id="PS50294">
    <property type="entry name" value="WD_REPEATS_REGION"/>
    <property type="match status" value="1"/>
</dbReference>
<keyword id="KW-0002">3D-structure</keyword>
<keyword id="KW-0007">Acetylation</keyword>
<keyword id="KW-0010">Activator</keyword>
<keyword id="KW-0025">Alternative splicing</keyword>
<keyword id="KW-0984">Congenital hypothyroidism</keyword>
<keyword id="KW-0209">Deafness</keyword>
<keyword id="KW-0225">Disease variant</keyword>
<keyword id="KW-1017">Isopeptide bond</keyword>
<keyword id="KW-0539">Nucleus</keyword>
<keyword id="KW-0597">Phosphoprotein</keyword>
<keyword id="KW-1267">Proteomics identification</keyword>
<keyword id="KW-1185">Reference proteome</keyword>
<keyword id="KW-0677">Repeat</keyword>
<keyword id="KW-0804">Transcription</keyword>
<keyword id="KW-0805">Transcription regulation</keyword>
<keyword id="KW-0832">Ubl conjugation</keyword>
<keyword id="KW-0833">Ubl conjugation pathway</keyword>
<keyword id="KW-0853">WD repeat</keyword>
<organism>
    <name type="scientific">Homo sapiens</name>
    <name type="common">Human</name>
    <dbReference type="NCBI Taxonomy" id="9606"/>
    <lineage>
        <taxon>Eukaryota</taxon>
        <taxon>Metazoa</taxon>
        <taxon>Chordata</taxon>
        <taxon>Craniata</taxon>
        <taxon>Vertebrata</taxon>
        <taxon>Euteleostomi</taxon>
        <taxon>Mammalia</taxon>
        <taxon>Eutheria</taxon>
        <taxon>Euarchontoglires</taxon>
        <taxon>Primates</taxon>
        <taxon>Haplorrhini</taxon>
        <taxon>Catarrhini</taxon>
        <taxon>Hominidae</taxon>
        <taxon>Homo</taxon>
    </lineage>
</organism>
<evidence type="ECO:0000250" key="1"/>
<evidence type="ECO:0000250" key="2">
    <source>
        <dbReference type="UniProtKB" id="Q8BHJ5"/>
    </source>
</evidence>
<evidence type="ECO:0000250" key="3">
    <source>
        <dbReference type="UniProtKB" id="Q9BZK7"/>
    </source>
</evidence>
<evidence type="ECO:0000250" key="4">
    <source>
        <dbReference type="UniProtKB" id="Q9QXE7"/>
    </source>
</evidence>
<evidence type="ECO:0000255" key="5">
    <source>
        <dbReference type="PROSITE-ProRule" id="PRU00126"/>
    </source>
</evidence>
<evidence type="ECO:0000256" key="6">
    <source>
        <dbReference type="SAM" id="MobiDB-lite"/>
    </source>
</evidence>
<evidence type="ECO:0000269" key="7">
    <source>
    </source>
</evidence>
<evidence type="ECO:0000269" key="8">
    <source>
    </source>
</evidence>
<evidence type="ECO:0000269" key="9">
    <source>
    </source>
</evidence>
<evidence type="ECO:0000269" key="10">
    <source>
    </source>
</evidence>
<evidence type="ECO:0000269" key="11">
    <source>
    </source>
</evidence>
<evidence type="ECO:0000269" key="12">
    <source>
    </source>
</evidence>
<evidence type="ECO:0000269" key="13">
    <source>
    </source>
</evidence>
<evidence type="ECO:0000269" key="14">
    <source>
    </source>
</evidence>
<evidence type="ECO:0000269" key="15">
    <source>
    </source>
</evidence>
<evidence type="ECO:0000303" key="16">
    <source>
    </source>
</evidence>
<evidence type="ECO:0000303" key="17">
    <source>
    </source>
</evidence>
<evidence type="ECO:0000305" key="18"/>
<evidence type="ECO:0007744" key="19">
    <source>
        <dbReference type="PDB" id="2XTC"/>
    </source>
</evidence>
<evidence type="ECO:0007744" key="20">
    <source>
        <dbReference type="PDB" id="2XTD"/>
    </source>
</evidence>
<evidence type="ECO:0007744" key="21">
    <source>
        <dbReference type="PDB" id="2XTE"/>
    </source>
</evidence>
<evidence type="ECO:0007829" key="22">
    <source>
        <dbReference type="PDB" id="2XTC"/>
    </source>
</evidence>
<comment type="function">
    <text evidence="10 11">F-box-like protein involved in the recruitment of the ubiquitin/19S proteasome complex to nuclear receptor-regulated transcription units (PubMed:14980219). Plays an essential role in transcription activation mediated by nuclear receptors. Probably acts as integral component of corepressor complexes that mediates the recruitment of the 19S proteasome complex, leading to the subsequent proteasomal degradation of transcription repressor complexes, thereby allowing cofactor exchange (PubMed:21240272).</text>
</comment>
<comment type="subunit">
    <text evidence="4 8 9 11 12 14">Homotetramer; dimer of dimers (PubMed:21240272). Component of the N-Cor repressor complex, at least composed of NCOR1, NCOR2, HDAC3, TBL1X, TBL1R, CORO2A and GPS2 (PubMed:10809664, PubMed:21240272). Interacts with GPS2 (when sumoylated); leading to protect GPS2 against degradation by the proteasome (PubMed:24943844). Component of a E3 ubiquitin ligase complex containing UBE2D1, SIAH1, CACYBP/SIP, SKP1, APC and TBL1X (PubMed:11389839). Probably part of other corepressor complexes, that do not contain NCOR1 and NCOR2. Interacts with histones H2B, H3a and H4. Interacts with MECP2; recruits TBL1X to the heterochromatin foci (By similarity). Interacts with USP44 (PubMed:27880911).</text>
</comment>
<comment type="interaction">
    <interactant intactId="EBI-3505105">
        <id>O60907</id>
    </interactant>
    <interactant intactId="EBI-712710">
        <id>P36405</id>
        <label>ARL3</label>
    </interactant>
    <organismsDiffer>false</organismsDiffer>
    <experiments>3</experiments>
</comment>
<comment type="interaction">
    <interactant intactId="EBI-3505105">
        <id>O60907</id>
    </interactant>
    <interactant intactId="EBI-717399">
        <id>Q9BSI4</id>
        <label>TINF2</label>
    </interactant>
    <organismsDiffer>false</organismsDiffer>
    <experiments>2</experiments>
</comment>
<comment type="interaction">
    <interactant intactId="EBI-15904933">
        <id>O60907-2</id>
    </interactant>
    <interactant intactId="EBI-357034">
        <id>P25685</id>
        <label>DNAJB1</label>
    </interactant>
    <organismsDiffer>false</organismsDiffer>
    <experiments>3</experiments>
</comment>
<comment type="interaction">
    <interactant intactId="EBI-15904933">
        <id>O60907-2</id>
    </interactant>
    <interactant intactId="EBI-713355">
        <id>Q13227</id>
        <label>GPS2</label>
    </interactant>
    <organismsDiffer>false</organismsDiffer>
    <experiments>6</experiments>
</comment>
<comment type="interaction">
    <interactant intactId="EBI-15904933">
        <id>O60907-2</id>
    </interactant>
    <interactant intactId="EBI-948266">
        <id>O14901</id>
        <label>KLF11</label>
    </interactant>
    <organismsDiffer>false</organismsDiffer>
    <experiments>3</experiments>
</comment>
<comment type="interaction">
    <interactant intactId="EBI-15904933">
        <id>O60907-2</id>
    </interactant>
    <interactant intactId="EBI-80830">
        <id>Q9Y618</id>
        <label>NCOR2</label>
    </interactant>
    <organismsDiffer>false</organismsDiffer>
    <experiments>7</experiments>
</comment>
<comment type="interaction">
    <interactant intactId="EBI-15904933">
        <id>O60907-2</id>
    </interactant>
    <interactant intactId="EBI-15904933">
        <id>O60907-2</id>
        <label>TBL1X</label>
    </interactant>
    <organismsDiffer>false</organismsDiffer>
    <experiments>2</experiments>
</comment>
<comment type="subcellular location">
    <subcellularLocation>
        <location evidence="1">Nucleus</location>
    </subcellularLocation>
    <text evidence="4">Colocalized with MECP2 to the heterochromatin foci.</text>
</comment>
<comment type="alternative products">
    <event type="alternative splicing"/>
    <isoform>
        <id>O60907-1</id>
        <name>1</name>
        <sequence type="displayed"/>
    </isoform>
    <isoform>
        <id>O60907-2</id>
        <name>2</name>
        <sequence type="described" ref="VSP_036905"/>
    </isoform>
</comment>
<comment type="tissue specificity">
    <text evidence="7">Ubiquitous.</text>
</comment>
<comment type="domain">
    <text evidence="1">The F-box-like domain is related to the F-box domain, and apparently displays the same function as component of ubiquitin E3 ligase complexes.</text>
</comment>
<comment type="disease" evidence="13 15">
    <disease id="DI-05650">
        <name>Hypothyroidism, congenital, non-goitrous, 8</name>
        <acronym>CHNG8</acronym>
        <description>A form of central hypothyroidism, a disorder characterized by sub-optimal thyroid hormone secretion, due to insufficient stimulation by the thyroid stimulating hormone of an otherwise normal thyroid gland. It may be caused by congenital or acquired disorders of the pituitary gland or hypothalamus. CHNG8 is a congenital, X-linked, relatively mild form which may be accompanied by hearing loss in some patients.</description>
        <dbReference type="MIM" id="301033"/>
    </disease>
    <text>The disease is caused by variants affecting the gene represented in this entry.</text>
</comment>
<comment type="similarity">
    <text evidence="18">Belongs to the WD repeat EBI family.</text>
</comment>
<accession>O60907</accession>
<accession>A8K044</accession>
<accession>A8K4J7</accession>
<accession>Q86UY2</accession>
<gene>
    <name type="primary">TBL1X</name>
    <name type="synonym">TBL1</name>
</gene>
<reference key="1">
    <citation type="journal article" date="1999" name="Am. J. Hum. Genet.">
        <title>X-linked late-onset sensorineural deafness caused by a deletion involving OA1 and a novel gene containing WD-40 repeats.</title>
        <authorList>
            <person name="Bassi M.T."/>
            <person name="Ramesar R.S."/>
            <person name="Caciotti B."/>
            <person name="Winship I.M."/>
            <person name="De Grandi A."/>
            <person name="Riboni M."/>
            <person name="Townes P.L."/>
            <person name="Beighton P."/>
            <person name="Ballabio A."/>
            <person name="Borsani G."/>
        </authorList>
    </citation>
    <scope>NUCLEOTIDE SEQUENCE [MRNA] (ISOFORM 1)</scope>
    <scope>TISSUE SPECIFICITY</scope>
</reference>
<reference key="2">
    <citation type="journal article" date="2004" name="Nat. Genet.">
        <title>Complete sequencing and characterization of 21,243 full-length human cDNAs.</title>
        <authorList>
            <person name="Ota T."/>
            <person name="Suzuki Y."/>
            <person name="Nishikawa T."/>
            <person name="Otsuki T."/>
            <person name="Sugiyama T."/>
            <person name="Irie R."/>
            <person name="Wakamatsu A."/>
            <person name="Hayashi K."/>
            <person name="Sato H."/>
            <person name="Nagai K."/>
            <person name="Kimura K."/>
            <person name="Makita H."/>
            <person name="Sekine M."/>
            <person name="Obayashi M."/>
            <person name="Nishi T."/>
            <person name="Shibahara T."/>
            <person name="Tanaka T."/>
            <person name="Ishii S."/>
            <person name="Yamamoto J."/>
            <person name="Saito K."/>
            <person name="Kawai Y."/>
            <person name="Isono Y."/>
            <person name="Nakamura Y."/>
            <person name="Nagahari K."/>
            <person name="Murakami K."/>
            <person name="Yasuda T."/>
            <person name="Iwayanagi T."/>
            <person name="Wagatsuma M."/>
            <person name="Shiratori A."/>
            <person name="Sudo H."/>
            <person name="Hosoiri T."/>
            <person name="Kaku Y."/>
            <person name="Kodaira H."/>
            <person name="Kondo H."/>
            <person name="Sugawara M."/>
            <person name="Takahashi M."/>
            <person name="Kanda K."/>
            <person name="Yokoi T."/>
            <person name="Furuya T."/>
            <person name="Kikkawa E."/>
            <person name="Omura Y."/>
            <person name="Abe K."/>
            <person name="Kamihara K."/>
            <person name="Katsuta N."/>
            <person name="Sato K."/>
            <person name="Tanikawa M."/>
            <person name="Yamazaki M."/>
            <person name="Ninomiya K."/>
            <person name="Ishibashi T."/>
            <person name="Yamashita H."/>
            <person name="Murakawa K."/>
            <person name="Fujimori K."/>
            <person name="Tanai H."/>
            <person name="Kimata M."/>
            <person name="Watanabe M."/>
            <person name="Hiraoka S."/>
            <person name="Chiba Y."/>
            <person name="Ishida S."/>
            <person name="Ono Y."/>
            <person name="Takiguchi S."/>
            <person name="Watanabe S."/>
            <person name="Yosida M."/>
            <person name="Hotuta T."/>
            <person name="Kusano J."/>
            <person name="Kanehori K."/>
            <person name="Takahashi-Fujii A."/>
            <person name="Hara H."/>
            <person name="Tanase T.-O."/>
            <person name="Nomura Y."/>
            <person name="Togiya S."/>
            <person name="Komai F."/>
            <person name="Hara R."/>
            <person name="Takeuchi K."/>
            <person name="Arita M."/>
            <person name="Imose N."/>
            <person name="Musashino K."/>
            <person name="Yuuki H."/>
            <person name="Oshima A."/>
            <person name="Sasaki N."/>
            <person name="Aotsuka S."/>
            <person name="Yoshikawa Y."/>
            <person name="Matsunawa H."/>
            <person name="Ichihara T."/>
            <person name="Shiohata N."/>
            <person name="Sano S."/>
            <person name="Moriya S."/>
            <person name="Momiyama H."/>
            <person name="Satoh N."/>
            <person name="Takami S."/>
            <person name="Terashima Y."/>
            <person name="Suzuki O."/>
            <person name="Nakagawa S."/>
            <person name="Senoh A."/>
            <person name="Mizoguchi H."/>
            <person name="Goto Y."/>
            <person name="Shimizu F."/>
            <person name="Wakebe H."/>
            <person name="Hishigaki H."/>
            <person name="Watanabe T."/>
            <person name="Sugiyama A."/>
            <person name="Takemoto M."/>
            <person name="Kawakami B."/>
            <person name="Yamazaki M."/>
            <person name="Watanabe K."/>
            <person name="Kumagai A."/>
            <person name="Itakura S."/>
            <person name="Fukuzumi Y."/>
            <person name="Fujimori Y."/>
            <person name="Komiyama M."/>
            <person name="Tashiro H."/>
            <person name="Tanigami A."/>
            <person name="Fujiwara T."/>
            <person name="Ono T."/>
            <person name="Yamada K."/>
            <person name="Fujii Y."/>
            <person name="Ozaki K."/>
            <person name="Hirao M."/>
            <person name="Ohmori Y."/>
            <person name="Kawabata A."/>
            <person name="Hikiji T."/>
            <person name="Kobatake N."/>
            <person name="Inagaki H."/>
            <person name="Ikema Y."/>
            <person name="Okamoto S."/>
            <person name="Okitani R."/>
            <person name="Kawakami T."/>
            <person name="Noguchi S."/>
            <person name="Itoh T."/>
            <person name="Shigeta K."/>
            <person name="Senba T."/>
            <person name="Matsumura K."/>
            <person name="Nakajima Y."/>
            <person name="Mizuno T."/>
            <person name="Morinaga M."/>
            <person name="Sasaki M."/>
            <person name="Togashi T."/>
            <person name="Oyama M."/>
            <person name="Hata H."/>
            <person name="Watanabe M."/>
            <person name="Komatsu T."/>
            <person name="Mizushima-Sugano J."/>
            <person name="Satoh T."/>
            <person name="Shirai Y."/>
            <person name="Takahashi Y."/>
            <person name="Nakagawa K."/>
            <person name="Okumura K."/>
            <person name="Nagase T."/>
            <person name="Nomura N."/>
            <person name="Kikuchi H."/>
            <person name="Masuho Y."/>
            <person name="Yamashita R."/>
            <person name="Nakai K."/>
            <person name="Yada T."/>
            <person name="Nakamura Y."/>
            <person name="Ohara O."/>
            <person name="Isogai T."/>
            <person name="Sugano S."/>
        </authorList>
    </citation>
    <scope>NUCLEOTIDE SEQUENCE [LARGE SCALE MRNA] (ISOFORMS 1 AND 2)</scope>
</reference>
<reference key="3">
    <citation type="journal article" date="2005" name="Nature">
        <title>The DNA sequence of the human X chromosome.</title>
        <authorList>
            <person name="Ross M.T."/>
            <person name="Grafham D.V."/>
            <person name="Coffey A.J."/>
            <person name="Scherer S."/>
            <person name="McLay K."/>
            <person name="Muzny D."/>
            <person name="Platzer M."/>
            <person name="Howell G.R."/>
            <person name="Burrows C."/>
            <person name="Bird C.P."/>
            <person name="Frankish A."/>
            <person name="Lovell F.L."/>
            <person name="Howe K.L."/>
            <person name="Ashurst J.L."/>
            <person name="Fulton R.S."/>
            <person name="Sudbrak R."/>
            <person name="Wen G."/>
            <person name="Jones M.C."/>
            <person name="Hurles M.E."/>
            <person name="Andrews T.D."/>
            <person name="Scott C.E."/>
            <person name="Searle S."/>
            <person name="Ramser J."/>
            <person name="Whittaker A."/>
            <person name="Deadman R."/>
            <person name="Carter N.P."/>
            <person name="Hunt S.E."/>
            <person name="Chen R."/>
            <person name="Cree A."/>
            <person name="Gunaratne P."/>
            <person name="Havlak P."/>
            <person name="Hodgson A."/>
            <person name="Metzker M.L."/>
            <person name="Richards S."/>
            <person name="Scott G."/>
            <person name="Steffen D."/>
            <person name="Sodergren E."/>
            <person name="Wheeler D.A."/>
            <person name="Worley K.C."/>
            <person name="Ainscough R."/>
            <person name="Ambrose K.D."/>
            <person name="Ansari-Lari M.A."/>
            <person name="Aradhya S."/>
            <person name="Ashwell R.I."/>
            <person name="Babbage A.K."/>
            <person name="Bagguley C.L."/>
            <person name="Ballabio A."/>
            <person name="Banerjee R."/>
            <person name="Barker G.E."/>
            <person name="Barlow K.F."/>
            <person name="Barrett I.P."/>
            <person name="Bates K.N."/>
            <person name="Beare D.M."/>
            <person name="Beasley H."/>
            <person name="Beasley O."/>
            <person name="Beck A."/>
            <person name="Bethel G."/>
            <person name="Blechschmidt K."/>
            <person name="Brady N."/>
            <person name="Bray-Allen S."/>
            <person name="Bridgeman A.M."/>
            <person name="Brown A.J."/>
            <person name="Brown M.J."/>
            <person name="Bonnin D."/>
            <person name="Bruford E.A."/>
            <person name="Buhay C."/>
            <person name="Burch P."/>
            <person name="Burford D."/>
            <person name="Burgess J."/>
            <person name="Burrill W."/>
            <person name="Burton J."/>
            <person name="Bye J.M."/>
            <person name="Carder C."/>
            <person name="Carrel L."/>
            <person name="Chako J."/>
            <person name="Chapman J.C."/>
            <person name="Chavez D."/>
            <person name="Chen E."/>
            <person name="Chen G."/>
            <person name="Chen Y."/>
            <person name="Chen Z."/>
            <person name="Chinault C."/>
            <person name="Ciccodicola A."/>
            <person name="Clark S.Y."/>
            <person name="Clarke G."/>
            <person name="Clee C.M."/>
            <person name="Clegg S."/>
            <person name="Clerc-Blankenburg K."/>
            <person name="Clifford K."/>
            <person name="Cobley V."/>
            <person name="Cole C.G."/>
            <person name="Conquer J.S."/>
            <person name="Corby N."/>
            <person name="Connor R.E."/>
            <person name="David R."/>
            <person name="Davies J."/>
            <person name="Davis C."/>
            <person name="Davis J."/>
            <person name="Delgado O."/>
            <person name="Deshazo D."/>
            <person name="Dhami P."/>
            <person name="Ding Y."/>
            <person name="Dinh H."/>
            <person name="Dodsworth S."/>
            <person name="Draper H."/>
            <person name="Dugan-Rocha S."/>
            <person name="Dunham A."/>
            <person name="Dunn M."/>
            <person name="Durbin K.J."/>
            <person name="Dutta I."/>
            <person name="Eades T."/>
            <person name="Ellwood M."/>
            <person name="Emery-Cohen A."/>
            <person name="Errington H."/>
            <person name="Evans K.L."/>
            <person name="Faulkner L."/>
            <person name="Francis F."/>
            <person name="Frankland J."/>
            <person name="Fraser A.E."/>
            <person name="Galgoczy P."/>
            <person name="Gilbert J."/>
            <person name="Gill R."/>
            <person name="Gloeckner G."/>
            <person name="Gregory S.G."/>
            <person name="Gribble S."/>
            <person name="Griffiths C."/>
            <person name="Grocock R."/>
            <person name="Gu Y."/>
            <person name="Gwilliam R."/>
            <person name="Hamilton C."/>
            <person name="Hart E.A."/>
            <person name="Hawes A."/>
            <person name="Heath P.D."/>
            <person name="Heitmann K."/>
            <person name="Hennig S."/>
            <person name="Hernandez J."/>
            <person name="Hinzmann B."/>
            <person name="Ho S."/>
            <person name="Hoffs M."/>
            <person name="Howden P.J."/>
            <person name="Huckle E.J."/>
            <person name="Hume J."/>
            <person name="Hunt P.J."/>
            <person name="Hunt A.R."/>
            <person name="Isherwood J."/>
            <person name="Jacob L."/>
            <person name="Johnson D."/>
            <person name="Jones S."/>
            <person name="de Jong P.J."/>
            <person name="Joseph S.S."/>
            <person name="Keenan S."/>
            <person name="Kelly S."/>
            <person name="Kershaw J.K."/>
            <person name="Khan Z."/>
            <person name="Kioschis P."/>
            <person name="Klages S."/>
            <person name="Knights A.J."/>
            <person name="Kosiura A."/>
            <person name="Kovar-Smith C."/>
            <person name="Laird G.K."/>
            <person name="Langford C."/>
            <person name="Lawlor S."/>
            <person name="Leversha M."/>
            <person name="Lewis L."/>
            <person name="Liu W."/>
            <person name="Lloyd C."/>
            <person name="Lloyd D.M."/>
            <person name="Loulseged H."/>
            <person name="Loveland J.E."/>
            <person name="Lovell J.D."/>
            <person name="Lozado R."/>
            <person name="Lu J."/>
            <person name="Lyne R."/>
            <person name="Ma J."/>
            <person name="Maheshwari M."/>
            <person name="Matthews L.H."/>
            <person name="McDowall J."/>
            <person name="McLaren S."/>
            <person name="McMurray A."/>
            <person name="Meidl P."/>
            <person name="Meitinger T."/>
            <person name="Milne S."/>
            <person name="Miner G."/>
            <person name="Mistry S.L."/>
            <person name="Morgan M."/>
            <person name="Morris S."/>
            <person name="Mueller I."/>
            <person name="Mullikin J.C."/>
            <person name="Nguyen N."/>
            <person name="Nordsiek G."/>
            <person name="Nyakatura G."/>
            <person name="O'dell C.N."/>
            <person name="Okwuonu G."/>
            <person name="Palmer S."/>
            <person name="Pandian R."/>
            <person name="Parker D."/>
            <person name="Parrish J."/>
            <person name="Pasternak S."/>
            <person name="Patel D."/>
            <person name="Pearce A.V."/>
            <person name="Pearson D.M."/>
            <person name="Pelan S.E."/>
            <person name="Perez L."/>
            <person name="Porter K.M."/>
            <person name="Ramsey Y."/>
            <person name="Reichwald K."/>
            <person name="Rhodes S."/>
            <person name="Ridler K.A."/>
            <person name="Schlessinger D."/>
            <person name="Schueler M.G."/>
            <person name="Sehra H.K."/>
            <person name="Shaw-Smith C."/>
            <person name="Shen H."/>
            <person name="Sheridan E.M."/>
            <person name="Shownkeen R."/>
            <person name="Skuce C.D."/>
            <person name="Smith M.L."/>
            <person name="Sotheran E.C."/>
            <person name="Steingruber H.E."/>
            <person name="Steward C.A."/>
            <person name="Storey R."/>
            <person name="Swann R.M."/>
            <person name="Swarbreck D."/>
            <person name="Tabor P.E."/>
            <person name="Taudien S."/>
            <person name="Taylor T."/>
            <person name="Teague B."/>
            <person name="Thomas K."/>
            <person name="Thorpe A."/>
            <person name="Timms K."/>
            <person name="Tracey A."/>
            <person name="Trevanion S."/>
            <person name="Tromans A.C."/>
            <person name="d'Urso M."/>
            <person name="Verduzco D."/>
            <person name="Villasana D."/>
            <person name="Waldron L."/>
            <person name="Wall M."/>
            <person name="Wang Q."/>
            <person name="Warren J."/>
            <person name="Warry G.L."/>
            <person name="Wei X."/>
            <person name="West A."/>
            <person name="Whitehead S.L."/>
            <person name="Whiteley M.N."/>
            <person name="Wilkinson J.E."/>
            <person name="Willey D.L."/>
            <person name="Williams G."/>
            <person name="Williams L."/>
            <person name="Williamson A."/>
            <person name="Williamson H."/>
            <person name="Wilming L."/>
            <person name="Woodmansey R.L."/>
            <person name="Wray P.W."/>
            <person name="Yen J."/>
            <person name="Zhang J."/>
            <person name="Zhou J."/>
            <person name="Zoghbi H."/>
            <person name="Zorilla S."/>
            <person name="Buck D."/>
            <person name="Reinhardt R."/>
            <person name="Poustka A."/>
            <person name="Rosenthal A."/>
            <person name="Lehrach H."/>
            <person name="Meindl A."/>
            <person name="Minx P.J."/>
            <person name="Hillier L.W."/>
            <person name="Willard H.F."/>
            <person name="Wilson R.K."/>
            <person name="Waterston R.H."/>
            <person name="Rice C.M."/>
            <person name="Vaudin M."/>
            <person name="Coulson A."/>
            <person name="Nelson D.L."/>
            <person name="Weinstock G."/>
            <person name="Sulston J.E."/>
            <person name="Durbin R.M."/>
            <person name="Hubbard T."/>
            <person name="Gibbs R.A."/>
            <person name="Beck S."/>
            <person name="Rogers J."/>
            <person name="Bentley D.R."/>
        </authorList>
    </citation>
    <scope>NUCLEOTIDE SEQUENCE [LARGE SCALE GENOMIC DNA]</scope>
</reference>
<reference key="4">
    <citation type="journal article" date="2004" name="Genome Res.">
        <title>The status, quality, and expansion of the NIH full-length cDNA project: the Mammalian Gene Collection (MGC).</title>
        <authorList>
            <consortium name="The MGC Project Team"/>
        </authorList>
    </citation>
    <scope>NUCLEOTIDE SEQUENCE [LARGE SCALE MRNA] (ISOFORMS 1 AND 2)</scope>
    <source>
        <tissue>Lymph</tissue>
        <tissue>Pancreas</tissue>
    </source>
</reference>
<reference key="5">
    <citation type="journal article" date="2000" name="Genes Dev.">
        <title>A core SMRT corepressor complex containing HDAC3 and TBL1, a WD40-repeat protein linked to deafness.</title>
        <authorList>
            <person name="Guenther M.G."/>
            <person name="Lane W.S."/>
            <person name="Fischle W."/>
            <person name="Verdin E."/>
            <person name="Lazar M.A."/>
            <person name="Shiekhattar R."/>
        </authorList>
    </citation>
    <scope>IDENTIFICATION BY MASS SPECTROMETRY</scope>
    <scope>COMPONENT OF THE N-COR COMPLEX WITH NCOR2 AND HDAC3</scope>
</reference>
<reference key="6">
    <citation type="journal article" date="2000" name="EMBO J.">
        <title>Both corepressor proteins SMRT and N-CoR exist in large protein complexes containing HDAC3.</title>
        <authorList>
            <person name="Li J."/>
            <person name="Wang J."/>
            <person name="Wang J."/>
            <person name="Nawaz Z."/>
            <person name="Liu J.M."/>
            <person name="Qin J."/>
            <person name="Wong J."/>
        </authorList>
    </citation>
    <scope>COMPONENT OF THE N-COR COMPLEX WITH NCOR2 AND HDAC3</scope>
</reference>
<reference key="7">
    <citation type="journal article" date="2001" name="Mol. Cell">
        <title>Siah-1, SIP, and Ebi collaborate in a novel pathway for beta-catenin degradation linked to p53 responses.</title>
        <authorList>
            <person name="Matsuzawa S."/>
            <person name="Reed J.C."/>
        </authorList>
    </citation>
    <scope>SUBUNIT OF A COMPLEX WITH UBE2D1; CACYBP; SIAH1 AND APC</scope>
</reference>
<reference key="8">
    <citation type="journal article" date="2002" name="Mol. Cell">
        <title>The N-CoR-HDAC3 nuclear receptor corepressor complex inhibits the JNK pathway through the integral subunit GPS2.</title>
        <authorList>
            <person name="Zhang J."/>
            <person name="Kalkum M."/>
            <person name="Chait B.T."/>
            <person name="Roeder R.G."/>
        </authorList>
    </citation>
    <scope>COMPONENT OF THE N-COR COMPLEX WITH NCOR1; NCOR2; GPS2; TBL1R AND HDAC3</scope>
</reference>
<reference key="9">
    <citation type="journal article" date="2003" name="EMBO J.">
        <title>Purification and functional characterization of the human N-CoR complex: the roles of HDAC3, TBL1 and TBLR1.</title>
        <authorList>
            <person name="Yoon H.-G."/>
            <person name="Chan D.W."/>
            <person name="Huang Z.-Q."/>
            <person name="Li J."/>
            <person name="Fondell J.D."/>
            <person name="Qin J."/>
            <person name="Wong J."/>
        </authorList>
    </citation>
    <scope>COMPONENT OF THE N-COR COMPLEX WITH TBL1R; CORO2A AND HDAC3</scope>
    <scope>HISTONE-BINDING</scope>
</reference>
<reference key="10">
    <citation type="journal article" date="2004" name="Cell">
        <title>A corepressor/coactivator exchange complex required for transcriptional activation by nuclear receptors and other regulated transcription factors.</title>
        <authorList>
            <person name="Perissi V."/>
            <person name="Aggarwal A."/>
            <person name="Glass C.K."/>
            <person name="Rose D.W."/>
            <person name="Rosenfeld M.G."/>
        </authorList>
    </citation>
    <scope>FUNCTION</scope>
    <scope>RECRUITMENT OF 19S PROTEASOME COMPLEX</scope>
</reference>
<reference key="11">
    <citation type="journal article" date="2014" name="Mol. Biol. Cell">
        <title>SUMOylation of GPS2 protein regulates its transcription-suppressing function.</title>
        <authorList>
            <person name="Bi H."/>
            <person name="Li S."/>
            <person name="Wang M."/>
            <person name="Jia Z."/>
            <person name="Chang A.K."/>
            <person name="Pang P."/>
            <person name="Wu H."/>
        </authorList>
    </citation>
    <scope>INTERACTION WITH GPS2</scope>
</reference>
<reference key="12">
    <citation type="journal article" date="2016" name="J. Clin. Endocrinol. Metab.">
        <title>Mutations in TBL1X are associated with central hypothyroidism.</title>
        <authorList>
            <person name="Heinen C.A."/>
            <person name="Losekoot M."/>
            <person name="Sun Y."/>
            <person name="Watson P.J."/>
            <person name="Fairall L."/>
            <person name="Joustra S.D."/>
            <person name="Zwaveling-Soonawala N."/>
            <person name="Oostdijk W."/>
            <person name="van den Akker E.L."/>
            <person name="Alders M."/>
            <person name="Santen G.W."/>
            <person name="van Rijn R.R."/>
            <person name="Dreschler W.A."/>
            <person name="Surovtseva O.V."/>
            <person name="Biermasz N.R."/>
            <person name="Hennekam R.C."/>
            <person name="Wit J.M."/>
            <person name="Schwabe J.W."/>
            <person name="Boelen A."/>
            <person name="Fliers E."/>
            <person name="van Trotsenburg A.S."/>
        </authorList>
    </citation>
    <scope>INVOLVEMENT IN CHNG8</scope>
    <scope>VARIANTS CHNG8 TYR-416; THR-417; ARG-420; TYR-504 AND CYS-509</scope>
    <scope>CHARACTERIZATION OF VARIANTS CHNG8 TYR-416; THR-417; TYR-504 AND CYS-509</scope>
</reference>
<reference key="13">
    <citation type="journal article" date="2016" name="Cell Rep.">
        <title>USP44 Is an Integral Component of N-CoR that Contributes to Gene Repression by Deubiquitinating Histone H2B.</title>
        <authorList>
            <person name="Lan X."/>
            <person name="Atanassov B.S."/>
            <person name="Li W."/>
            <person name="Zhang Y."/>
            <person name="Florens L."/>
            <person name="Mohan R.D."/>
            <person name="Galardy P.J."/>
            <person name="Washburn M.P."/>
            <person name="Workman J.L."/>
            <person name="Dent S.Y.R."/>
        </authorList>
    </citation>
    <scope>INTERACTION WITH USP44</scope>
</reference>
<reference key="14">
    <citation type="journal article" date="2019" name="J. Endocr. Soc.">
        <title>Central hypothyroidism and novel clinical phenotypes in hemizygous truncation of TBL1X.</title>
        <authorList>
            <person name="Garcia M."/>
            <person name="Barreda-Bonis A.C."/>
            <person name="Jimenez P."/>
            <person name="Rabanal I."/>
            <person name="Ortiz A."/>
            <person name="Vallespin E."/>
            <person name="Del Pozo A."/>
            <person name="Martinez-San Millan J."/>
            <person name="Gonzalez-Casado I."/>
            <person name="Moreno J.C."/>
        </authorList>
    </citation>
    <scope>INVOLVEMENT IN CHNG8</scope>
    <scope>VARIANT CHNG8 339-ARG--LYS-577 DEL</scope>
</reference>
<reference evidence="19 20 21" key="15">
    <citation type="journal article" date="2011" name="Nat. Struct. Mol. Biol.">
        <title>Structural basis for the assembly of the SMRT/NCoR core transcriptional repression machinery.</title>
        <authorList>
            <person name="Oberoi J."/>
            <person name="Fairall L."/>
            <person name="Watson P.J."/>
            <person name="Yang J.C."/>
            <person name="Czimmerer Z."/>
            <person name="Kampmann T."/>
            <person name="Goult B.T."/>
            <person name="Greenwood J.A."/>
            <person name="Gooch J.T."/>
            <person name="Kallenberger B.C."/>
            <person name="Nagy L."/>
            <person name="Neuhaus D."/>
            <person name="Schwabe J.W."/>
        </authorList>
    </citation>
    <scope>X-RAY CRYSTALLOGRAPHY (2.22 ANGSTROMS) OF 52-141</scope>
    <scope>FUNCTION</scope>
    <scope>SUBUNIT</scope>
    <scope>IDENTIFICATION IN THE N-COR COMPLEX</scope>
    <scope>MUTAGENESIS OF PHE-77; ILE-90; LEU-94; PRO-96; LEU-108; VAL-111 AND ILE-117</scope>
</reference>
<name>TBL1X_HUMAN</name>
<protein>
    <recommendedName>
        <fullName>F-box-like/WD repeat-containing protein TBL1X</fullName>
    </recommendedName>
    <alternativeName>
        <fullName>SMAP55</fullName>
    </alternativeName>
    <alternativeName>
        <fullName>Transducin beta-like protein 1X</fullName>
    </alternativeName>
    <alternativeName>
        <fullName>Transducin-beta-like protein 1, X-linked</fullName>
    </alternativeName>
</protein>
<feature type="chain" id="PRO_0000051263" description="F-box-like/WD repeat-containing protein TBL1X">
    <location>
        <begin position="1"/>
        <end position="577"/>
    </location>
</feature>
<feature type="domain" description="LisH" evidence="5">
    <location>
        <begin position="55"/>
        <end position="87"/>
    </location>
</feature>
<feature type="domain" description="F-box-like">
    <location>
        <begin position="92"/>
        <end position="137"/>
    </location>
</feature>
<feature type="repeat" description="WD 1">
    <location>
        <begin position="230"/>
        <end position="269"/>
    </location>
</feature>
<feature type="repeat" description="WD 2">
    <location>
        <begin position="286"/>
        <end position="325"/>
    </location>
</feature>
<feature type="repeat" description="WD 3">
    <location>
        <begin position="327"/>
        <end position="366"/>
    </location>
</feature>
<feature type="repeat" description="WD 4">
    <location>
        <begin position="369"/>
        <end position="409"/>
    </location>
</feature>
<feature type="repeat" description="WD 5">
    <location>
        <begin position="410"/>
        <end position="449"/>
    </location>
</feature>
<feature type="repeat" description="WD 6">
    <location>
        <begin position="452"/>
        <end position="500"/>
    </location>
</feature>
<feature type="repeat" description="WD 7">
    <location>
        <begin position="503"/>
        <end position="542"/>
    </location>
</feature>
<feature type="repeat" description="WD 8">
    <location>
        <begin position="544"/>
        <end position="576"/>
    </location>
</feature>
<feature type="region of interest" description="Disordered" evidence="6">
    <location>
        <begin position="177"/>
        <end position="202"/>
    </location>
</feature>
<feature type="modified residue" description="N6-acetyllysine" evidence="2">
    <location>
        <position position="153"/>
    </location>
</feature>
<feature type="modified residue" description="Phosphoserine" evidence="3">
    <location>
        <position position="183"/>
    </location>
</feature>
<feature type="cross-link" description="Glycyl lysine isopeptide (Lys-Gly) (interchain with G-Cter in SUMO2)" evidence="3">
    <location>
        <position position="340"/>
    </location>
</feature>
<feature type="splice variant" id="VSP_036905" description="In isoform 2." evidence="16 17">
    <location>
        <begin position="1"/>
        <end position="51"/>
    </location>
</feature>
<feature type="sequence variant" id="VAR_083285" description="In CHNG8." evidence="15">
    <location>
        <begin position="339"/>
        <end position="577"/>
    </location>
</feature>
<feature type="sequence variant" id="VAR_083286" description="In CHNG8; uncertain significance; decreased protein expression." evidence="13">
    <original>N</original>
    <variation>Y</variation>
    <location>
        <position position="416"/>
    </location>
</feature>
<feature type="sequence variant" id="VAR_083287" description="In CHNG8; uncertain significance; no effect on protein expression." evidence="13">
    <original>A</original>
    <variation>T</variation>
    <location>
        <position position="417"/>
    </location>
</feature>
<feature type="sequence variant" id="VAR_083288" description="In CHNG8; uncertain significance." evidence="13">
    <original>W</original>
    <variation>R</variation>
    <location>
        <position position="420"/>
    </location>
</feature>
<feature type="sequence variant" id="VAR_083289" description="In CHNG8; uncertain significance; decreased protein expression." evidence="13">
    <original>H</original>
    <variation>Y</variation>
    <location>
        <position position="504"/>
    </location>
</feature>
<feature type="sequence variant" id="VAR_083290" description="In CHNG8; uncertain significance; no effect on protein expression." evidence="13">
    <original>Y</original>
    <variation>C</variation>
    <location>
        <position position="509"/>
    </location>
</feature>
<feature type="mutagenesis site" description="Abolished homotetramerization, leading to a homodimer." evidence="11">
    <original>F</original>
    <variation>A</variation>
    <location>
        <position position="77"/>
    </location>
</feature>
<feature type="mutagenesis site" description="Reduced interaction with NCOR2 and GPS2." evidence="11">
    <original>I</original>
    <variation>A</variation>
    <location>
        <position position="90"/>
    </location>
</feature>
<feature type="mutagenesis site" description="Does not affect interaction with NCOR2 and GPS2." evidence="11">
    <original>L</original>
    <variation>A</variation>
    <variation>E</variation>
    <location>
        <position position="94"/>
    </location>
</feature>
<feature type="mutagenesis site" description="Does not affect interaction with NCOR2 and GPS2." evidence="11">
    <original>P</original>
    <variation>G</variation>
    <location>
        <position position="96"/>
    </location>
</feature>
<feature type="mutagenesis site" description="Reduced interaction with NCOR2 and GPS2." evidence="11">
    <original>L</original>
    <variation>A</variation>
    <variation>Q</variation>
    <location>
        <position position="108"/>
    </location>
</feature>
<feature type="mutagenesis site" description="Reduced interaction with NCOR2 and GPS2. Abolished ability to repress transcription." evidence="11">
    <original>V</original>
    <variation>N</variation>
    <variation>Q</variation>
    <location>
        <position position="111"/>
    </location>
</feature>
<feature type="mutagenesis site" description="Does not affect interaction with NCOR2 and GPS2." evidence="11">
    <original>I</original>
    <variation>A</variation>
    <location>
        <position position="117"/>
    </location>
</feature>
<feature type="sequence conflict" description="In Ref. 2; BAF82098." evidence="18" ref="2">
    <original>T</original>
    <variation>A</variation>
    <location>
        <position position="316"/>
    </location>
</feature>
<feature type="sequence conflict" description="In Ref. 2; BAF83651." evidence="18" ref="2">
    <original>T</original>
    <variation>A</variation>
    <location>
        <position position="390"/>
    </location>
</feature>
<feature type="helix" evidence="22">
    <location>
        <begin position="56"/>
        <end position="69"/>
    </location>
</feature>
<feature type="helix" evidence="22">
    <location>
        <begin position="73"/>
        <end position="82"/>
    </location>
</feature>
<feature type="helix" evidence="22">
    <location>
        <begin position="85"/>
        <end position="87"/>
    </location>
</feature>
<feature type="helix" evidence="22">
    <location>
        <begin position="92"/>
        <end position="94"/>
    </location>
</feature>
<feature type="helix" evidence="22">
    <location>
        <begin position="99"/>
        <end position="116"/>
    </location>
</feature>